<dbReference type="EMBL" id="X04520">
    <property type="protein sequence ID" value="CAA28204.1"/>
    <property type="molecule type" value="mRNA"/>
</dbReference>
<dbReference type="EMBL" id="X12817">
    <property type="protein sequence ID" value="CAA31305.1"/>
    <property type="molecule type" value="Genomic_DNA"/>
</dbReference>
<dbReference type="EMBL" id="X07004">
    <property type="protein sequence ID" value="CAA30059.1"/>
    <property type="status" value="ALT_SEQ"/>
    <property type="molecule type" value="Genomic_DNA"/>
</dbReference>
<dbReference type="EMBL" id="X07005">
    <property type="protein sequence ID" value="CAA30059.1"/>
    <property type="status" value="JOINED"/>
    <property type="molecule type" value="Genomic_DNA"/>
</dbReference>
<dbReference type="EMBL" id="X07006">
    <property type="protein sequence ID" value="CAA30059.1"/>
    <property type="status" value="JOINED"/>
    <property type="molecule type" value="Genomic_DNA"/>
</dbReference>
<dbReference type="EMBL" id="X07007">
    <property type="protein sequence ID" value="CAA30059.1"/>
    <property type="status" value="JOINED"/>
    <property type="molecule type" value="Genomic_DNA"/>
</dbReference>
<dbReference type="EMBL" id="X07008">
    <property type="protein sequence ID" value="CAA30059.1"/>
    <property type="status" value="JOINED"/>
    <property type="molecule type" value="Genomic_DNA"/>
</dbReference>
<dbReference type="EMBL" id="X07009">
    <property type="protein sequence ID" value="CAA30059.1"/>
    <property type="status" value="JOINED"/>
    <property type="molecule type" value="Genomic_DNA"/>
</dbReference>
<dbReference type="EMBL" id="M32236">
    <property type="protein sequence ID" value="AAA31510.1"/>
    <property type="molecule type" value="Genomic_DNA"/>
</dbReference>
<dbReference type="EMBL" id="M32233">
    <property type="protein sequence ID" value="AAA31510.1"/>
    <property type="status" value="JOINED"/>
    <property type="molecule type" value="Genomic_DNA"/>
</dbReference>
<dbReference type="EMBL" id="M32232">
    <property type="protein sequence ID" value="AAA31510.1"/>
    <property type="status" value="JOINED"/>
    <property type="molecule type" value="Genomic_DNA"/>
</dbReference>
<dbReference type="EMBL" id="M32235">
    <property type="protein sequence ID" value="AAA31510.1"/>
    <property type="status" value="JOINED"/>
    <property type="molecule type" value="Genomic_DNA"/>
</dbReference>
<dbReference type="PIR" id="JQ0749">
    <property type="entry name" value="LGSH"/>
</dbReference>
<dbReference type="RefSeq" id="NP_001009366.1">
    <property type="nucleotide sequence ID" value="NM_001009366.1"/>
</dbReference>
<dbReference type="PDB" id="4CK4">
    <property type="method" value="X-ray"/>
    <property type="resolution" value="1.12 A"/>
    <property type="chains" value="A/B=19-180"/>
</dbReference>
<dbReference type="PDB" id="4NLI">
    <property type="method" value="X-ray"/>
    <property type="resolution" value="1.90 A"/>
    <property type="chains" value="A=19-180"/>
</dbReference>
<dbReference type="PDB" id="4NLJ">
    <property type="method" value="X-ray"/>
    <property type="resolution" value="1.40 A"/>
    <property type="chains" value="A/B=19-180"/>
</dbReference>
<dbReference type="PDB" id="6T44">
    <property type="method" value="X-ray"/>
    <property type="resolution" value="2.00 A"/>
    <property type="chains" value="AAA/BBB=19-180"/>
</dbReference>
<dbReference type="PDBsum" id="4CK4"/>
<dbReference type="PDBsum" id="4NLI"/>
<dbReference type="PDBsum" id="4NLJ"/>
<dbReference type="PDBsum" id="6T44"/>
<dbReference type="SMR" id="P67976"/>
<dbReference type="STRING" id="9940.ENSOARP00000005471"/>
<dbReference type="Allergome" id="1257">
    <property type="allergen name" value="Ovi a 5"/>
</dbReference>
<dbReference type="PaxDb" id="9940-ENSOARP00000005471"/>
<dbReference type="Ensembl" id="ENSOART00220095520">
    <property type="protein sequence ID" value="ENSOARP00220050216"/>
    <property type="gene ID" value="ENSOARG00220057872"/>
</dbReference>
<dbReference type="GeneID" id="443385"/>
<dbReference type="KEGG" id="oas:443385"/>
<dbReference type="CTD" id="5047"/>
<dbReference type="eggNOG" id="ENOG502T0EI">
    <property type="taxonomic scope" value="Eukaryota"/>
</dbReference>
<dbReference type="OrthoDB" id="9835883at2759"/>
<dbReference type="EvolutionaryTrace" id="P67976"/>
<dbReference type="Proteomes" id="UP000002356">
    <property type="component" value="Unplaced"/>
</dbReference>
<dbReference type="GO" id="GO:0005576">
    <property type="term" value="C:extracellular region"/>
    <property type="evidence" value="ECO:0007669"/>
    <property type="project" value="UniProtKB-SubCell"/>
</dbReference>
<dbReference type="GO" id="GO:0019841">
    <property type="term" value="F:retinol binding"/>
    <property type="evidence" value="ECO:0007669"/>
    <property type="project" value="UniProtKB-KW"/>
</dbReference>
<dbReference type="CDD" id="cd19416">
    <property type="entry name" value="lipocalin_beta-LG-like"/>
    <property type="match status" value="1"/>
</dbReference>
<dbReference type="FunFam" id="2.40.128.20:FF:000029">
    <property type="entry name" value="Beta-lactoglobulin"/>
    <property type="match status" value="1"/>
</dbReference>
<dbReference type="Gene3D" id="2.40.128.20">
    <property type="match status" value="1"/>
</dbReference>
<dbReference type="InterPro" id="IPR002447">
    <property type="entry name" value="Blactoglobulin"/>
</dbReference>
<dbReference type="InterPro" id="IPR012674">
    <property type="entry name" value="Calycin"/>
</dbReference>
<dbReference type="InterPro" id="IPR002345">
    <property type="entry name" value="Lipocalin"/>
</dbReference>
<dbReference type="InterPro" id="IPR022272">
    <property type="entry name" value="Lipocalin_CS"/>
</dbReference>
<dbReference type="InterPro" id="IPR000566">
    <property type="entry name" value="Lipocln_cytosolic_FA-bd_dom"/>
</dbReference>
<dbReference type="PANTHER" id="PTHR11430:SF117">
    <property type="entry name" value="GLYCODELIN"/>
    <property type="match status" value="1"/>
</dbReference>
<dbReference type="PANTHER" id="PTHR11430">
    <property type="entry name" value="LIPOCALIN"/>
    <property type="match status" value="1"/>
</dbReference>
<dbReference type="Pfam" id="PF00061">
    <property type="entry name" value="Lipocalin"/>
    <property type="match status" value="1"/>
</dbReference>
<dbReference type="PRINTS" id="PR01172">
    <property type="entry name" value="BLCTOGLOBULN"/>
</dbReference>
<dbReference type="PRINTS" id="PR00179">
    <property type="entry name" value="LIPOCALIN"/>
</dbReference>
<dbReference type="SUPFAM" id="SSF50814">
    <property type="entry name" value="Lipocalins"/>
    <property type="match status" value="1"/>
</dbReference>
<dbReference type="PROSITE" id="PS00213">
    <property type="entry name" value="LIPOCALIN"/>
    <property type="match status" value="1"/>
</dbReference>
<organism>
    <name type="scientific">Ovis aries</name>
    <name type="common">Sheep</name>
    <dbReference type="NCBI Taxonomy" id="9940"/>
    <lineage>
        <taxon>Eukaryota</taxon>
        <taxon>Metazoa</taxon>
        <taxon>Chordata</taxon>
        <taxon>Craniata</taxon>
        <taxon>Vertebrata</taxon>
        <taxon>Euteleostomi</taxon>
        <taxon>Mammalia</taxon>
        <taxon>Eutheria</taxon>
        <taxon>Laurasiatheria</taxon>
        <taxon>Artiodactyla</taxon>
        <taxon>Ruminantia</taxon>
        <taxon>Pecora</taxon>
        <taxon>Bovidae</taxon>
        <taxon>Caprinae</taxon>
        <taxon>Ovis</taxon>
    </lineage>
</organism>
<reference key="1">
    <citation type="journal article" date="1988" name="J. Mol. Biol.">
        <title>Characterization of the gene encoding ovine beta-lactoglobulin. Similarity to the genes for retinol binding protein and other secretory proteins.</title>
        <authorList>
            <person name="Ali S."/>
            <person name="Clark A.J."/>
        </authorList>
    </citation>
    <scope>NUCLEOTIDE SEQUENCE [GENOMIC DNA] (BLG 1 AND 2)</scope>
</reference>
<reference key="2">
    <citation type="journal article" date="1986" name="Biochimie">
        <title>Ovine beta-lactoglobulin messenger RNA: nucleotide sequence and mRNA levels during functional differentiation of the mammary gland.</title>
        <authorList>
            <person name="Gaye P."/>
            <person name="Hue-Delahaie D."/>
            <person name="Mercier J.-C."/>
            <person name="Soulier S."/>
            <person name="Vilotte J.-L."/>
            <person name="Furet J.-P."/>
        </authorList>
    </citation>
    <scope>NUCLEOTIDE SEQUENCE [MRNA] (BLG 1)</scope>
</reference>
<reference key="3">
    <citation type="journal article" date="1988" name="Nucleic Acids Res.">
        <title>Complete nucleotide sequence of the genomic ovine beta-lactoglobulin gene.</title>
        <authorList>
            <person name="Harris S."/>
            <person name="Ali S."/>
            <person name="Anderson S."/>
            <person name="Archibald A.L."/>
            <person name="Clark A.J."/>
        </authorList>
    </citation>
    <scope>NUCLEOTIDE SEQUENCE [GENOMIC DNA] (BLG 1)</scope>
</reference>
<reference key="4">
    <citation type="journal article" date="1990" name="Gene">
        <title>Characterisation of the alleles encoding ovine beta-lactoglobulins A and B.</title>
        <authorList>
            <person name="Ali S."/>
            <person name="McClenaghan M."/>
            <person name="Simons J.P."/>
            <person name="Clark A.J."/>
        </authorList>
    </citation>
    <scope>NUCLEOTIDE SEQUENCE [GENOMIC DNA] (BLG 1 AND 2)</scope>
</reference>
<reference key="5">
    <citation type="journal article" date="1980" name="Arch. Int. Physiol. Biochim.">
        <title>Primary structure of ovine beta-lactoglobulin.</title>
        <authorList>
            <person name="Preaux G."/>
            <person name="Braunitzer G."/>
            <person name="Kolde H.-J."/>
        </authorList>
    </citation>
    <scope>PROTEIN SEQUENCE OF 19-180 (BLG 2)</scope>
</reference>
<reference key="6">
    <citation type="journal article" date="1989" name="Biol. Chem. Hoppe-Seyler">
        <title>Isolation and complete primary sequence of a new ovine wild-type beta-lactoglobulin C.</title>
        <authorList>
            <person name="Erhardt G."/>
            <person name="Godovac-Zimmermann J."/>
            <person name="Conti A."/>
        </authorList>
    </citation>
    <scope>PROTEIN SEQUENCE OF 19-180 (BLG 3)</scope>
</reference>
<protein>
    <recommendedName>
        <fullName>Beta-lactoglobulin-1/B</fullName>
        <shortName>Beta-LG</shortName>
    </recommendedName>
</protein>
<name>LACB_SHEEP</name>
<comment type="function">
    <text>Lactoglobulin is the primary component of whey, it binds retinol and is probably involved in the transport of that molecule.</text>
</comment>
<comment type="subunit">
    <text>Under physiological conditions beta-lactoglobulin exists as an equilibrium mixture of monomeric and dimeric forms.</text>
</comment>
<comment type="subcellular location">
    <subcellularLocation>
        <location>Secreted</location>
    </subcellularLocation>
</comment>
<comment type="PTM">
    <text>Alternate disulfide bonds occur in equal amounts.</text>
</comment>
<comment type="similarity">
    <text evidence="3">Belongs to the calycin superfamily. Lipocalin family.</text>
</comment>
<sequence length="180" mass="19921">MKCLLLALGLALACGVQAIIVTQTMKGLDIQKVAGTWHSLAMAASDISLLDAQSAPLRVYVEELKPTPEGNLEILLQKWENGECAQKKIIAEKTKIPAVFKIDALNENKVLVLDTDYKKYLLFCMENSAEPEQSLACQCLVRTPEVDNEALEKFDKALKALPMHIRLAFNPTQLEGQCHV</sequence>
<proteinExistence type="evidence at protein level"/>
<accession>P67976</accession>
<accession>P02757</accession>
<evidence type="ECO:0000269" key="1">
    <source>
    </source>
</evidence>
<evidence type="ECO:0000269" key="2">
    <source>
    </source>
</evidence>
<evidence type="ECO:0000305" key="3"/>
<evidence type="ECO:0007829" key="4">
    <source>
        <dbReference type="PDB" id="4NLJ"/>
    </source>
</evidence>
<keyword id="KW-0002">3D-structure</keyword>
<keyword id="KW-0903">Direct protein sequencing</keyword>
<keyword id="KW-1015">Disulfide bond</keyword>
<keyword id="KW-0494">Milk protein</keyword>
<keyword id="KW-1185">Reference proteome</keyword>
<keyword id="KW-0683">Retinol-binding</keyword>
<keyword id="KW-0964">Secreted</keyword>
<keyword id="KW-0732">Signal</keyword>
<keyword id="KW-0813">Transport</keyword>
<feature type="signal peptide" evidence="1 2">
    <location>
        <begin position="1"/>
        <end position="18"/>
    </location>
</feature>
<feature type="chain" id="PRO_0000017910" description="Beta-lactoglobulin-1/B">
    <location>
        <begin position="19"/>
        <end position="180"/>
    </location>
</feature>
<feature type="disulfide bond">
    <location>
        <begin position="84"/>
        <end position="178"/>
    </location>
</feature>
<feature type="disulfide bond" description="Alternate">
    <location>
        <begin position="124"/>
        <end position="139"/>
    </location>
</feature>
<feature type="disulfide bond">
    <location>
        <begin position="124"/>
        <end position="137"/>
    </location>
</feature>
<feature type="sequence variant" description="In lactoglobulin 2=A and 3=C.">
    <original>H</original>
    <variation>Y</variation>
    <location>
        <position position="38"/>
    </location>
</feature>
<feature type="sequence variant" description="In lactoglobulin 3=C.">
    <original>R</original>
    <variation>Q</variation>
    <location>
        <position position="166"/>
    </location>
</feature>
<feature type="helix" evidence="4">
    <location>
        <begin position="30"/>
        <end position="33"/>
    </location>
</feature>
<feature type="strand" evidence="4">
    <location>
        <begin position="38"/>
        <end position="46"/>
    </location>
</feature>
<feature type="helix" evidence="4">
    <location>
        <begin position="47"/>
        <end position="49"/>
    </location>
</feature>
<feature type="strand" evidence="4">
    <location>
        <begin position="60"/>
        <end position="66"/>
    </location>
</feature>
<feature type="strand" evidence="4">
    <location>
        <begin position="72"/>
        <end position="80"/>
    </location>
</feature>
<feature type="strand" evidence="4">
    <location>
        <begin position="83"/>
        <end position="93"/>
    </location>
</feature>
<feature type="strand" evidence="4">
    <location>
        <begin position="99"/>
        <end position="104"/>
    </location>
</feature>
<feature type="strand" evidence="4">
    <location>
        <begin position="107"/>
        <end position="115"/>
    </location>
</feature>
<feature type="strand" evidence="4">
    <location>
        <begin position="117"/>
        <end position="126"/>
    </location>
</feature>
<feature type="helix" evidence="4">
    <location>
        <begin position="131"/>
        <end position="133"/>
    </location>
</feature>
<feature type="strand" evidence="4">
    <location>
        <begin position="136"/>
        <end position="145"/>
    </location>
</feature>
<feature type="helix" evidence="4">
    <location>
        <begin position="148"/>
        <end position="158"/>
    </location>
</feature>
<feature type="strand" evidence="4">
    <location>
        <begin position="165"/>
        <end position="168"/>
    </location>
</feature>
<feature type="helix" evidence="4">
    <location>
        <begin position="171"/>
        <end position="174"/>
    </location>
</feature>
<feature type="turn" evidence="4">
    <location>
        <begin position="177"/>
        <end position="179"/>
    </location>
</feature>